<keyword id="KW-0150">Chloroplast</keyword>
<keyword id="KW-0186">Copper</keyword>
<keyword id="KW-0903">Direct protein sequencing</keyword>
<keyword id="KW-0249">Electron transport</keyword>
<keyword id="KW-0472">Membrane</keyword>
<keyword id="KW-0479">Metal-binding</keyword>
<keyword id="KW-0934">Plastid</keyword>
<keyword id="KW-0793">Thylakoid</keyword>
<keyword id="KW-0813">Transport</keyword>
<dbReference type="PIR" id="A00300">
    <property type="entry name" value="CULC"/>
</dbReference>
<dbReference type="SMR" id="P00290"/>
<dbReference type="GO" id="GO:0009535">
    <property type="term" value="C:chloroplast thylakoid membrane"/>
    <property type="evidence" value="ECO:0007669"/>
    <property type="project" value="UniProtKB-SubCell"/>
</dbReference>
<dbReference type="GO" id="GO:0005507">
    <property type="term" value="F:copper ion binding"/>
    <property type="evidence" value="ECO:0007669"/>
    <property type="project" value="InterPro"/>
</dbReference>
<dbReference type="GO" id="GO:0009055">
    <property type="term" value="F:electron transfer activity"/>
    <property type="evidence" value="ECO:0007669"/>
    <property type="project" value="InterPro"/>
</dbReference>
<dbReference type="CDD" id="cd04219">
    <property type="entry name" value="Plastocyanin"/>
    <property type="match status" value="1"/>
</dbReference>
<dbReference type="Gene3D" id="2.60.40.420">
    <property type="entry name" value="Cupredoxins - blue copper proteins"/>
    <property type="match status" value="1"/>
</dbReference>
<dbReference type="InterPro" id="IPR000923">
    <property type="entry name" value="BlueCu_1"/>
</dbReference>
<dbReference type="InterPro" id="IPR028871">
    <property type="entry name" value="BlueCu_1_BS"/>
</dbReference>
<dbReference type="InterPro" id="IPR001235">
    <property type="entry name" value="Copper_blue_Plastocyanin"/>
</dbReference>
<dbReference type="InterPro" id="IPR008972">
    <property type="entry name" value="Cupredoxin"/>
</dbReference>
<dbReference type="InterPro" id="IPR002387">
    <property type="entry name" value="Plastocyanin"/>
</dbReference>
<dbReference type="NCBIfam" id="TIGR02656">
    <property type="entry name" value="cyanin_plasto"/>
    <property type="match status" value="1"/>
</dbReference>
<dbReference type="PANTHER" id="PTHR34192">
    <property type="entry name" value="PLASTOCYANIN MAJOR ISOFORM, CHLOROPLASTIC-RELATED"/>
    <property type="match status" value="1"/>
</dbReference>
<dbReference type="PANTHER" id="PTHR34192:SF10">
    <property type="entry name" value="PLASTOCYANIN MAJOR ISOFORM, CHLOROPLASTIC-RELATED"/>
    <property type="match status" value="1"/>
</dbReference>
<dbReference type="Pfam" id="PF00127">
    <property type="entry name" value="Copper-bind"/>
    <property type="match status" value="1"/>
</dbReference>
<dbReference type="PRINTS" id="PR00156">
    <property type="entry name" value="COPPERBLUE"/>
</dbReference>
<dbReference type="PRINTS" id="PR00157">
    <property type="entry name" value="PLASTOCYANIN"/>
</dbReference>
<dbReference type="SUPFAM" id="SSF49503">
    <property type="entry name" value="Cupredoxins"/>
    <property type="match status" value="1"/>
</dbReference>
<dbReference type="PROSITE" id="PS00196">
    <property type="entry name" value="COPPER_BLUE"/>
    <property type="match status" value="1"/>
</dbReference>
<reference key="1">
    <citation type="journal article" date="1976" name="Phytochemistry">
        <title>The amino acid sequence of plastocyanin from Lactuca sativa (lettuce).</title>
        <authorList>
            <person name="Ramshaw J.A.M."/>
            <person name="Scawen M.D."/>
            <person name="Jones E.A."/>
            <person name="Brown R.H."/>
            <person name="Boulter D."/>
        </authorList>
    </citation>
    <scope>PROTEIN SEQUENCE</scope>
    <scope>SUBCELLULAR LOCATION</scope>
</reference>
<proteinExistence type="evidence at protein level"/>
<protein>
    <recommendedName>
        <fullName>Plastocyanin</fullName>
    </recommendedName>
</protein>
<gene>
    <name type="primary">PETE</name>
</gene>
<comment type="function">
    <text evidence="1">Participates in electron transfer between P700 and the cytochrome b6-f complex in photosystem I.</text>
</comment>
<comment type="cofactor">
    <cofactor evidence="1">
        <name>Cu(2+)</name>
        <dbReference type="ChEBI" id="CHEBI:29036"/>
    </cofactor>
</comment>
<comment type="subcellular location">
    <subcellularLocation>
        <location evidence="2">Plastid</location>
        <location evidence="2">Chloroplast thylakoid membrane</location>
        <topology evidence="1">Peripheral membrane protein</topology>
        <orientation evidence="1">Lumenal side</orientation>
    </subcellularLocation>
    <text>Loosely bound to the inner thylakoid membrane surface in chloroplasts (By similarity).</text>
</comment>
<comment type="similarity">
    <text evidence="3">Belongs to the plastocyanin family.</text>
</comment>
<feature type="chain" id="PRO_0000085568" description="Plastocyanin">
    <location>
        <begin position="1"/>
        <end position="99"/>
    </location>
</feature>
<feature type="domain" description="Plastocyanin-like">
    <location>
        <begin position="1"/>
        <end position="99"/>
    </location>
</feature>
<feature type="binding site" evidence="1">
    <location>
        <position position="37"/>
    </location>
    <ligand>
        <name>Cu cation</name>
        <dbReference type="ChEBI" id="CHEBI:23378"/>
    </ligand>
</feature>
<feature type="binding site" evidence="1">
    <location>
        <position position="84"/>
    </location>
    <ligand>
        <name>Cu cation</name>
        <dbReference type="ChEBI" id="CHEBI:23378"/>
    </ligand>
</feature>
<feature type="binding site" evidence="1">
    <location>
        <position position="87"/>
    </location>
    <ligand>
        <name>Cu cation</name>
        <dbReference type="ChEBI" id="CHEBI:23378"/>
    </ligand>
</feature>
<feature type="binding site" evidence="1">
    <location>
        <position position="92"/>
    </location>
    <ligand>
        <name>Cu cation</name>
        <dbReference type="ChEBI" id="CHEBI:23378"/>
    </ligand>
</feature>
<sequence>AEVLLGSSDGGLVFEPSTFSVASGEKIVFKNNAGFPHNVVFDEDEIPAGVDASKISMSEEDLLNAPGETYAVTLTEKGTYSFYCAPHQGAGMVGKVTVN</sequence>
<name>PLAS_LACSA</name>
<accession>P00290</accession>
<organism>
    <name type="scientific">Lactuca sativa</name>
    <name type="common">Garden lettuce</name>
    <dbReference type="NCBI Taxonomy" id="4236"/>
    <lineage>
        <taxon>Eukaryota</taxon>
        <taxon>Viridiplantae</taxon>
        <taxon>Streptophyta</taxon>
        <taxon>Embryophyta</taxon>
        <taxon>Tracheophyta</taxon>
        <taxon>Spermatophyta</taxon>
        <taxon>Magnoliopsida</taxon>
        <taxon>eudicotyledons</taxon>
        <taxon>Gunneridae</taxon>
        <taxon>Pentapetalae</taxon>
        <taxon>asterids</taxon>
        <taxon>campanulids</taxon>
        <taxon>Asterales</taxon>
        <taxon>Asteraceae</taxon>
        <taxon>Cichorioideae</taxon>
        <taxon>Cichorieae</taxon>
        <taxon>Lactucinae</taxon>
        <taxon>Lactuca</taxon>
    </lineage>
</organism>
<evidence type="ECO:0000250" key="1">
    <source>
        <dbReference type="UniProtKB" id="P18068"/>
    </source>
</evidence>
<evidence type="ECO:0000269" key="2">
    <source ref="1"/>
</evidence>
<evidence type="ECO:0000305" key="3"/>